<feature type="chain" id="PRO_0000153095" description="Nitrogenase molybdenum-iron protein beta chain">
    <location>
        <begin position="1"/>
        <end position="513"/>
    </location>
</feature>
<feature type="binding site" evidence="1">
    <location>
        <position position="68"/>
    </location>
    <ligand>
        <name>[8Fe-7S] cluster</name>
        <dbReference type="ChEBI" id="CHEBI:21143"/>
        <note>ligand shared with alpha chain</note>
    </ligand>
</feature>
<feature type="binding site" evidence="1">
    <location>
        <position position="93"/>
    </location>
    <ligand>
        <name>[8Fe-7S] cluster</name>
        <dbReference type="ChEBI" id="CHEBI:21143"/>
        <note>ligand shared with alpha chain</note>
    </ligand>
</feature>
<feature type="binding site" evidence="1">
    <location>
        <position position="150"/>
    </location>
    <ligand>
        <name>[8Fe-7S] cluster</name>
        <dbReference type="ChEBI" id="CHEBI:21143"/>
        <note>ligand shared with alpha chain</note>
    </ligand>
</feature>
<keyword id="KW-0067">ATP-binding</keyword>
<keyword id="KW-0408">Iron</keyword>
<keyword id="KW-0411">Iron-sulfur</keyword>
<keyword id="KW-0479">Metal-binding</keyword>
<keyword id="KW-0535">Nitrogen fixation</keyword>
<keyword id="KW-0547">Nucleotide-binding</keyword>
<keyword id="KW-0560">Oxidoreductase</keyword>
<evidence type="ECO:0000250" key="1"/>
<evidence type="ECO:0000305" key="2"/>
<gene>
    <name type="primary">nifK</name>
</gene>
<dbReference type="EC" id="1.18.6.1"/>
<dbReference type="EMBL" id="X01139">
    <property type="protein sequence ID" value="CAA25597.1"/>
    <property type="molecule type" value="Genomic_DNA"/>
</dbReference>
<dbReference type="SMR" id="P06122"/>
<dbReference type="GO" id="GO:0016612">
    <property type="term" value="C:molybdenum-iron nitrogenase complex"/>
    <property type="evidence" value="ECO:0007669"/>
    <property type="project" value="InterPro"/>
</dbReference>
<dbReference type="GO" id="GO:0005524">
    <property type="term" value="F:ATP binding"/>
    <property type="evidence" value="ECO:0007669"/>
    <property type="project" value="UniProtKB-KW"/>
</dbReference>
<dbReference type="GO" id="GO:0051536">
    <property type="term" value="F:iron-sulfur cluster binding"/>
    <property type="evidence" value="ECO:0007669"/>
    <property type="project" value="UniProtKB-KW"/>
</dbReference>
<dbReference type="GO" id="GO:0046872">
    <property type="term" value="F:metal ion binding"/>
    <property type="evidence" value="ECO:0007669"/>
    <property type="project" value="UniProtKB-KW"/>
</dbReference>
<dbReference type="GO" id="GO:0016163">
    <property type="term" value="F:nitrogenase activity"/>
    <property type="evidence" value="ECO:0007669"/>
    <property type="project" value="UniProtKB-EC"/>
</dbReference>
<dbReference type="GO" id="GO:0009399">
    <property type="term" value="P:nitrogen fixation"/>
    <property type="evidence" value="ECO:0007669"/>
    <property type="project" value="UniProtKB-KW"/>
</dbReference>
<dbReference type="CDD" id="cd01974">
    <property type="entry name" value="Nitrogenase_MoFe_beta"/>
    <property type="match status" value="1"/>
</dbReference>
<dbReference type="Gene3D" id="3.40.50.1980">
    <property type="entry name" value="Nitrogenase molybdenum iron protein domain"/>
    <property type="match status" value="3"/>
</dbReference>
<dbReference type="Gene3D" id="1.20.89.10">
    <property type="entry name" value="Nitrogenase Molybdenum-iron Protein, subunit B, domain 4"/>
    <property type="match status" value="1"/>
</dbReference>
<dbReference type="InterPro" id="IPR050152">
    <property type="entry name" value="ChlB/BchB/BchZ"/>
</dbReference>
<dbReference type="InterPro" id="IPR000510">
    <property type="entry name" value="Nase/OxRdtase_comp1"/>
</dbReference>
<dbReference type="InterPro" id="IPR000318">
    <property type="entry name" value="Nase_comp1_CS"/>
</dbReference>
<dbReference type="InterPro" id="IPR005976">
    <property type="entry name" value="Nase_Mo-Fe_CF_bsu"/>
</dbReference>
<dbReference type="InterPro" id="IPR024564">
    <property type="entry name" value="Nase_Mo-Fe_CF_bsu_N"/>
</dbReference>
<dbReference type="NCBIfam" id="TIGR01286">
    <property type="entry name" value="nifK"/>
    <property type="match status" value="1"/>
</dbReference>
<dbReference type="PANTHER" id="PTHR33712">
    <property type="entry name" value="LIGHT-INDEPENDENT PROTOCHLOROPHYLLIDE REDUCTASE SUBUNIT B"/>
    <property type="match status" value="1"/>
</dbReference>
<dbReference type="PANTHER" id="PTHR33712:SF7">
    <property type="entry name" value="LIGHT-INDEPENDENT PROTOCHLOROPHYLLIDE REDUCTASE SUBUNIT B"/>
    <property type="match status" value="1"/>
</dbReference>
<dbReference type="Pfam" id="PF11844">
    <property type="entry name" value="DUF3364"/>
    <property type="match status" value="1"/>
</dbReference>
<dbReference type="Pfam" id="PF00148">
    <property type="entry name" value="Oxidored_nitro"/>
    <property type="match status" value="1"/>
</dbReference>
<dbReference type="SUPFAM" id="SSF53807">
    <property type="entry name" value="Helical backbone' metal receptor"/>
    <property type="match status" value="1"/>
</dbReference>
<dbReference type="PROSITE" id="PS00699">
    <property type="entry name" value="NITROGENASE_1_1"/>
    <property type="match status" value="1"/>
</dbReference>
<dbReference type="PROSITE" id="PS00090">
    <property type="entry name" value="NITROGENASE_1_2"/>
    <property type="match status" value="1"/>
</dbReference>
<comment type="function">
    <text>This molybdenum-iron protein is part of the nitrogenase complex that catalyzes the key enzymatic reactions in nitrogen fixation.</text>
</comment>
<comment type="catalytic activity">
    <reaction>
        <text>N2 + 8 reduced [2Fe-2S]-[ferredoxin] + 16 ATP + 16 H2O = H2 + 8 oxidized [2Fe-2S]-[ferredoxin] + 2 NH4(+) + 16 ADP + 16 phosphate + 6 H(+)</text>
        <dbReference type="Rhea" id="RHEA:21448"/>
        <dbReference type="Rhea" id="RHEA-COMP:10000"/>
        <dbReference type="Rhea" id="RHEA-COMP:10001"/>
        <dbReference type="ChEBI" id="CHEBI:15377"/>
        <dbReference type="ChEBI" id="CHEBI:15378"/>
        <dbReference type="ChEBI" id="CHEBI:17997"/>
        <dbReference type="ChEBI" id="CHEBI:18276"/>
        <dbReference type="ChEBI" id="CHEBI:28938"/>
        <dbReference type="ChEBI" id="CHEBI:30616"/>
        <dbReference type="ChEBI" id="CHEBI:33737"/>
        <dbReference type="ChEBI" id="CHEBI:33738"/>
        <dbReference type="ChEBI" id="CHEBI:43474"/>
        <dbReference type="ChEBI" id="CHEBI:456216"/>
        <dbReference type="EC" id="1.18.6.1"/>
    </reaction>
</comment>
<comment type="cofactor">
    <cofactor evidence="1">
        <name>[8Fe-7S] cluster</name>
        <dbReference type="ChEBI" id="CHEBI:21143"/>
    </cofactor>
    <text evidence="1">Binds 1 [8Fe-7S] cluster per heterodimer.</text>
</comment>
<comment type="subunit">
    <text>Tetramer of two alpha and two beta chains. Forms complex with the iron protein (nitrogenase component 2).</text>
</comment>
<comment type="miscellaneous">
    <text>Ala-184 is present instead of the usual Ser that would serve as a ligand for the 8Fe-7S cluster in the oxidized state.</text>
</comment>
<comment type="similarity">
    <text evidence="2">Belongs to the NifD/NifK/NifE/NifN family.</text>
</comment>
<organism>
    <name type="scientific">Bradyrhizobium sp. (strain ANU 289)</name>
    <dbReference type="NCBI Taxonomy" id="186901"/>
    <lineage>
        <taxon>Bacteria</taxon>
        <taxon>Pseudomonadati</taxon>
        <taxon>Pseudomonadota</taxon>
        <taxon>Alphaproteobacteria</taxon>
        <taxon>Hyphomicrobiales</taxon>
        <taxon>Nitrobacteraceae</taxon>
        <taxon>Bradyrhizobium</taxon>
    </lineage>
</organism>
<proteinExistence type="inferred from homology"/>
<protein>
    <recommendedName>
        <fullName>Nitrogenase molybdenum-iron protein beta chain</fullName>
        <ecNumber>1.18.6.1</ecNumber>
    </recommendedName>
    <alternativeName>
        <fullName>Dinitrogenase</fullName>
    </alternativeName>
    <alternativeName>
        <fullName>Nitrogenase component I</fullName>
    </alternativeName>
</protein>
<accession>P06122</accession>
<name>NIFK_BRASP</name>
<sequence>MAQSADHVLDHLELFRGPEYQQMLADKKMFENPRDPAEVERIRAVTKTPEYREKNFAEALAVNPAKACQPLGAVFVSVGFEGTLPFVHGSQGCVAYYRSHLSRHFKEPSSCVSSSMTEDAAVFGGLNNMIDGLANSYNMYKPKMICSTTCMAEVIGDDLNAFIKTSKEKGSVRRSSTPFAHTPAFVGSHVTGYDNALKGILEHFWNGKAGTAPKLERKPNEAINIIGGFDGNTVGNLREIKRILALMGIKHTILADNSEVFDTPTDGEFRMYDGGTHVEDTANAIHAKATISMQQWCTEKTLPFVSEHGQDVVSFNYPVGVSATDDLLVALSRISGKEIPEQLARERGRLVDAIADSSAHIHGKKFAIYGDPDLCYGLAAFLLELGAEPTHVLSTNGNNVAGENATLFAGSPFGELPAYPGRDLWHMRSLLFTEPVDFLIGNTHGKYLERDTGTPLIRIGFPIFDRHHHHRFPVWGYQGGLNVLVKILDKIFDEIDKKTSVLGKTDYSFDIIR</sequence>
<reference key="1">
    <citation type="journal article" date="1984" name="Nucleic Acids Res.">
        <title>Structural analysis of the genes encoding the molybdenum-iron protein of nitrogenase in the Parasponia rhizobium strain ANU289.</title>
        <authorList>
            <person name="Weinman J.J."/>
            <person name="Fellows F.F."/>
            <person name="Gresshoff P.M."/>
            <person name="Shine J."/>
            <person name="Scott K.F."/>
        </authorList>
    </citation>
    <scope>NUCLEOTIDE SEQUENCE [GENOMIC DNA]</scope>
</reference>